<name>PYRB_BACCL</name>
<keyword id="KW-0665">Pyrimidine biosynthesis</keyword>
<keyword id="KW-0808">Transferase</keyword>
<protein>
    <recommendedName>
        <fullName evidence="1">Aspartate carbamoyltransferase catalytic subunit</fullName>
        <ecNumber evidence="1">2.1.3.2</ecNumber>
    </recommendedName>
    <alternativeName>
        <fullName evidence="1">Aspartate transcarbamylase</fullName>
        <shortName evidence="1">ATCase</shortName>
    </alternativeName>
</protein>
<accession>P41008</accession>
<comment type="function">
    <text evidence="1">Catalyzes the condensation of carbamoyl phosphate and aspartate to form carbamoyl aspartate and inorganic phosphate, the committed step in the de novo pyrimidine nucleotide biosynthesis pathway.</text>
</comment>
<comment type="catalytic activity">
    <reaction evidence="1">
        <text>carbamoyl phosphate + L-aspartate = N-carbamoyl-L-aspartate + phosphate + H(+)</text>
        <dbReference type="Rhea" id="RHEA:20013"/>
        <dbReference type="ChEBI" id="CHEBI:15378"/>
        <dbReference type="ChEBI" id="CHEBI:29991"/>
        <dbReference type="ChEBI" id="CHEBI:32814"/>
        <dbReference type="ChEBI" id="CHEBI:43474"/>
        <dbReference type="ChEBI" id="CHEBI:58228"/>
        <dbReference type="EC" id="2.1.3.2"/>
    </reaction>
</comment>
<comment type="pathway">
    <text evidence="1">Pyrimidine metabolism; UMP biosynthesis via de novo pathway; (S)-dihydroorotate from bicarbonate: step 2/3.</text>
</comment>
<comment type="subunit">
    <text evidence="1">Heterododecamer (2C3:3R2) of six catalytic PyrB chains organized as two trimers (C3), and six regulatory PyrI chains organized as three dimers (R2).</text>
</comment>
<comment type="similarity">
    <text evidence="1 2">Belongs to the aspartate/ornithine carbamoyltransferase superfamily. ATCase family.</text>
</comment>
<reference key="1">
    <citation type="journal article" date="1994" name="Microbiology">
        <title>Molecular characterization of pyrimidine biosynthesis genes from the thermophile Bacillus caldolyticus.</title>
        <authorList>
            <person name="Ghim S.Y."/>
            <person name="Nielsen P."/>
            <person name="Neuhard J."/>
        </authorList>
    </citation>
    <scope>NUCLEOTIDE SEQUENCE [GENOMIC DNA]</scope>
    <source>
        <strain>DSM 405 / NBRC 15313 / YP-T</strain>
    </source>
</reference>
<reference key="2">
    <citation type="journal article" date="1994" name="J. Bacteriol.">
        <title>The pyrimidine biosynthesis operon of the thermophile Bacillus caldolyticus includes genes for uracil phosphoribosyltransferase and uracil permease.</title>
        <authorList>
            <person name="Ghim S.Y."/>
            <person name="Neuhard J."/>
        </authorList>
    </citation>
    <scope>NUCLEOTIDE SEQUENCE [GENOMIC DNA] OF 1-61</scope>
    <source>
        <strain>DSM 405 / NBRC 15313 / YP-T</strain>
    </source>
</reference>
<evidence type="ECO:0000255" key="1">
    <source>
        <dbReference type="HAMAP-Rule" id="MF_00001"/>
    </source>
</evidence>
<evidence type="ECO:0000305" key="2"/>
<organism>
    <name type="scientific">Bacillus caldolyticus</name>
    <dbReference type="NCBI Taxonomy" id="1394"/>
    <lineage>
        <taxon>Bacteria</taxon>
        <taxon>Bacillati</taxon>
        <taxon>Bacillota</taxon>
        <taxon>Bacilli</taxon>
        <taxon>Bacillales</taxon>
        <taxon>Anoxybacillaceae</taxon>
        <taxon>Geobacillus</taxon>
        <taxon>Geobacillus thermoleovorans group</taxon>
    </lineage>
</organism>
<feature type="chain" id="PRO_0000113091" description="Aspartate carbamoyltransferase catalytic subunit">
    <location>
        <begin position="1"/>
        <end position="308"/>
    </location>
</feature>
<feature type="binding site" evidence="1">
    <location>
        <position position="49"/>
    </location>
    <ligand>
        <name>carbamoyl phosphate</name>
        <dbReference type="ChEBI" id="CHEBI:58228"/>
    </ligand>
</feature>
<feature type="binding site" evidence="1">
    <location>
        <position position="50"/>
    </location>
    <ligand>
        <name>carbamoyl phosphate</name>
        <dbReference type="ChEBI" id="CHEBI:58228"/>
    </ligand>
</feature>
<feature type="binding site" evidence="1">
    <location>
        <position position="77"/>
    </location>
    <ligand>
        <name>L-aspartate</name>
        <dbReference type="ChEBI" id="CHEBI:29991"/>
    </ligand>
</feature>
<feature type="binding site" evidence="1">
    <location>
        <position position="99"/>
    </location>
    <ligand>
        <name>carbamoyl phosphate</name>
        <dbReference type="ChEBI" id="CHEBI:58228"/>
    </ligand>
</feature>
<feature type="binding site" evidence="1">
    <location>
        <position position="127"/>
    </location>
    <ligand>
        <name>carbamoyl phosphate</name>
        <dbReference type="ChEBI" id="CHEBI:58228"/>
    </ligand>
</feature>
<feature type="binding site" evidence="1">
    <location>
        <position position="130"/>
    </location>
    <ligand>
        <name>carbamoyl phosphate</name>
        <dbReference type="ChEBI" id="CHEBI:58228"/>
    </ligand>
</feature>
<feature type="binding site" evidence="1">
    <location>
        <position position="160"/>
    </location>
    <ligand>
        <name>L-aspartate</name>
        <dbReference type="ChEBI" id="CHEBI:29991"/>
    </ligand>
</feature>
<feature type="binding site" evidence="1">
    <location>
        <position position="211"/>
    </location>
    <ligand>
        <name>L-aspartate</name>
        <dbReference type="ChEBI" id="CHEBI:29991"/>
    </ligand>
</feature>
<feature type="binding site" evidence="1">
    <location>
        <position position="252"/>
    </location>
    <ligand>
        <name>carbamoyl phosphate</name>
        <dbReference type="ChEBI" id="CHEBI:58228"/>
    </ligand>
</feature>
<feature type="binding site" evidence="1">
    <location>
        <position position="253"/>
    </location>
    <ligand>
        <name>carbamoyl phosphate</name>
        <dbReference type="ChEBI" id="CHEBI:58228"/>
    </ligand>
</feature>
<proteinExistence type="inferred from homology"/>
<dbReference type="EC" id="2.1.3.2" evidence="1"/>
<dbReference type="EMBL" id="X73308">
    <property type="protein sequence ID" value="CAA51736.1"/>
    <property type="molecule type" value="Genomic_DNA"/>
</dbReference>
<dbReference type="EMBL" id="X76083">
    <property type="protein sequence ID" value="CAA53698.1"/>
    <property type="molecule type" value="Genomic_DNA"/>
</dbReference>
<dbReference type="PIR" id="I40166">
    <property type="entry name" value="I40166"/>
</dbReference>
<dbReference type="SMR" id="P41008"/>
<dbReference type="UniPathway" id="UPA00070">
    <property type="reaction ID" value="UER00116"/>
</dbReference>
<dbReference type="GO" id="GO:0005829">
    <property type="term" value="C:cytosol"/>
    <property type="evidence" value="ECO:0007669"/>
    <property type="project" value="TreeGrafter"/>
</dbReference>
<dbReference type="GO" id="GO:0016597">
    <property type="term" value="F:amino acid binding"/>
    <property type="evidence" value="ECO:0007669"/>
    <property type="project" value="InterPro"/>
</dbReference>
<dbReference type="GO" id="GO:0004070">
    <property type="term" value="F:aspartate carbamoyltransferase activity"/>
    <property type="evidence" value="ECO:0007669"/>
    <property type="project" value="UniProtKB-UniRule"/>
</dbReference>
<dbReference type="GO" id="GO:0006207">
    <property type="term" value="P:'de novo' pyrimidine nucleobase biosynthetic process"/>
    <property type="evidence" value="ECO:0007669"/>
    <property type="project" value="InterPro"/>
</dbReference>
<dbReference type="GO" id="GO:0044205">
    <property type="term" value="P:'de novo' UMP biosynthetic process"/>
    <property type="evidence" value="ECO:0007669"/>
    <property type="project" value="UniProtKB-UniRule"/>
</dbReference>
<dbReference type="GO" id="GO:0006520">
    <property type="term" value="P:amino acid metabolic process"/>
    <property type="evidence" value="ECO:0007669"/>
    <property type="project" value="InterPro"/>
</dbReference>
<dbReference type="FunFam" id="3.40.50.1370:FF:000011">
    <property type="entry name" value="Aspartate carbamoyltransferase"/>
    <property type="match status" value="1"/>
</dbReference>
<dbReference type="Gene3D" id="3.40.50.1370">
    <property type="entry name" value="Aspartate/ornithine carbamoyltransferase"/>
    <property type="match status" value="2"/>
</dbReference>
<dbReference type="HAMAP" id="MF_00001">
    <property type="entry name" value="Asp_carb_tr"/>
    <property type="match status" value="1"/>
</dbReference>
<dbReference type="InterPro" id="IPR006132">
    <property type="entry name" value="Asp/Orn_carbamoyltranf_P-bd"/>
</dbReference>
<dbReference type="InterPro" id="IPR006130">
    <property type="entry name" value="Asp/Orn_carbamoylTrfase"/>
</dbReference>
<dbReference type="InterPro" id="IPR036901">
    <property type="entry name" value="Asp/Orn_carbamoylTrfase_sf"/>
</dbReference>
<dbReference type="InterPro" id="IPR002082">
    <property type="entry name" value="Asp_carbamoyltransf"/>
</dbReference>
<dbReference type="InterPro" id="IPR006131">
    <property type="entry name" value="Asp_carbamoyltransf_Asp/Orn-bd"/>
</dbReference>
<dbReference type="NCBIfam" id="TIGR00670">
    <property type="entry name" value="asp_carb_tr"/>
    <property type="match status" value="1"/>
</dbReference>
<dbReference type="NCBIfam" id="NF002032">
    <property type="entry name" value="PRK00856.1"/>
    <property type="match status" value="1"/>
</dbReference>
<dbReference type="PANTHER" id="PTHR45753:SF6">
    <property type="entry name" value="ASPARTATE CARBAMOYLTRANSFERASE"/>
    <property type="match status" value="1"/>
</dbReference>
<dbReference type="PANTHER" id="PTHR45753">
    <property type="entry name" value="ORNITHINE CARBAMOYLTRANSFERASE, MITOCHONDRIAL"/>
    <property type="match status" value="1"/>
</dbReference>
<dbReference type="Pfam" id="PF00185">
    <property type="entry name" value="OTCace"/>
    <property type="match status" value="1"/>
</dbReference>
<dbReference type="Pfam" id="PF02729">
    <property type="entry name" value="OTCace_N"/>
    <property type="match status" value="1"/>
</dbReference>
<dbReference type="PRINTS" id="PR00100">
    <property type="entry name" value="AOTCASE"/>
</dbReference>
<dbReference type="PRINTS" id="PR00101">
    <property type="entry name" value="ATCASE"/>
</dbReference>
<dbReference type="SUPFAM" id="SSF53671">
    <property type="entry name" value="Aspartate/ornithine carbamoyltransferase"/>
    <property type="match status" value="1"/>
</dbReference>
<dbReference type="PROSITE" id="PS00097">
    <property type="entry name" value="CARBAMOYLTRANSFERASE"/>
    <property type="match status" value="1"/>
</dbReference>
<gene>
    <name evidence="1" type="primary">pyrB</name>
</gene>
<sequence>MTHLFALSELPLDEIHRLLDEAERFRSGRIWRPAAPMYVANLFFEPSTRTKCSFEMAERKLGLHVIPFDPERSSVQKGETLYDTVRTLEAIGVDAVVIRHHEDAYFEALRHAVGIPIINAGDGCGHHPTQSLLDLLTIRQEFGAFTGLTVAIIGDIRHSRVARSNAEVLTRLGANVLFSGPEEWKDETNPYGTYVEVDEAIARADVVMLLRIQHERHAETMGLTKEEYHARYGLTLERARRMKSGAIILHPAPVNRGVEIASELVEAKASRIFKQMENGVYVRMAVLKRAMEGRMEHGRMAEKWHVVQ</sequence>